<comment type="catalytic activity">
    <reaction>
        <text>Hydrolysis of terminal non-reducing beta-D-fructofuranoside residues in beta-D-fructofuranosides.</text>
        <dbReference type="EC" id="3.2.1.26"/>
    </reaction>
</comment>
<comment type="subcellular location">
    <subcellularLocation>
        <location evidence="4">Secreted</location>
        <location evidence="4">Extracellular space</location>
        <location evidence="4">Apoplast</location>
    </subcellularLocation>
    <subcellularLocation>
        <location evidence="4">Secreted</location>
        <location evidence="4">Cell wall</location>
    </subcellularLocation>
    <text evidence="4">Associated to the cell wall.</text>
</comment>
<comment type="tissue specificity">
    <text evidence="3">Expressed in roots. Weakly expressed in flowers.</text>
</comment>
<comment type="similarity">
    <text evidence="4">Belongs to the glycosyl hydrolase 32 family.</text>
</comment>
<accession>Q56UD0</accession>
<accession>Q0J9A1</accession>
<accession>Q7XPK6</accession>
<proteinExistence type="evidence at transcript level"/>
<organism>
    <name type="scientific">Oryza sativa subsp. japonica</name>
    <name type="common">Rice</name>
    <dbReference type="NCBI Taxonomy" id="39947"/>
    <lineage>
        <taxon>Eukaryota</taxon>
        <taxon>Viridiplantae</taxon>
        <taxon>Streptophyta</taxon>
        <taxon>Embryophyta</taxon>
        <taxon>Tracheophyta</taxon>
        <taxon>Spermatophyta</taxon>
        <taxon>Magnoliopsida</taxon>
        <taxon>Liliopsida</taxon>
        <taxon>Poales</taxon>
        <taxon>Poaceae</taxon>
        <taxon>BOP clade</taxon>
        <taxon>Oryzoideae</taxon>
        <taxon>Oryzeae</taxon>
        <taxon>Oryzinae</taxon>
        <taxon>Oryza</taxon>
        <taxon>Oryza sativa</taxon>
    </lineage>
</organism>
<keyword id="KW-0052">Apoplast</keyword>
<keyword id="KW-0134">Cell wall</keyword>
<keyword id="KW-1015">Disulfide bond</keyword>
<keyword id="KW-0325">Glycoprotein</keyword>
<keyword id="KW-0326">Glycosidase</keyword>
<keyword id="KW-0378">Hydrolase</keyword>
<keyword id="KW-1185">Reference proteome</keyword>
<keyword id="KW-0964">Secreted</keyword>
<keyword id="KW-0732">Signal</keyword>
<protein>
    <recommendedName>
        <fullName>Beta-fructofuranosidase, insoluble isoenzyme 6</fullName>
        <ecNumber>3.2.1.26</ecNumber>
    </recommendedName>
    <alternativeName>
        <fullName>Cell wall beta-fructosidase 6</fullName>
    </alternativeName>
    <alternativeName>
        <fullName>Invertase 6</fullName>
    </alternativeName>
    <alternativeName>
        <fullName>OsCIN6</fullName>
    </alternativeName>
    <alternativeName>
        <fullName>Sucrose hydrolase 6</fullName>
    </alternativeName>
</protein>
<gene>
    <name type="primary">CIN6</name>
    <name type="ordered locus">Os04g0664800</name>
    <name type="ordered locus">LOC_Os04g56920</name>
    <name type="ORF">OSJNBa0087O24.3</name>
</gene>
<dbReference type="EC" id="3.2.1.26"/>
<dbReference type="EMBL" id="AY578163">
    <property type="protein sequence ID" value="AAT84406.1"/>
    <property type="molecule type" value="mRNA"/>
</dbReference>
<dbReference type="EMBL" id="AL606646">
    <property type="protein sequence ID" value="CAE03580.1"/>
    <property type="molecule type" value="Genomic_DNA"/>
</dbReference>
<dbReference type="EMBL" id="AP008210">
    <property type="protein sequence ID" value="BAF16086.2"/>
    <property type="molecule type" value="Genomic_DNA"/>
</dbReference>
<dbReference type="EMBL" id="AP014960">
    <property type="protein sequence ID" value="BAS91495.1"/>
    <property type="molecule type" value="Genomic_DNA"/>
</dbReference>
<dbReference type="RefSeq" id="XP_015634384.1">
    <property type="nucleotide sequence ID" value="XM_015778898.1"/>
</dbReference>
<dbReference type="SMR" id="Q56UD0"/>
<dbReference type="FunCoup" id="Q56UD0">
    <property type="interactions" value="167"/>
</dbReference>
<dbReference type="STRING" id="39947.Q56UD0"/>
<dbReference type="CAZy" id="GH32">
    <property type="family name" value="Glycoside Hydrolase Family 32"/>
</dbReference>
<dbReference type="GlyCosmos" id="Q56UD0">
    <property type="glycosylation" value="3 sites, No reported glycans"/>
</dbReference>
<dbReference type="PaxDb" id="39947-Q56UD0"/>
<dbReference type="EnsemblPlants" id="Os04t0664800-00">
    <property type="protein sequence ID" value="Os04t0664800-00"/>
    <property type="gene ID" value="Os04g0664800"/>
</dbReference>
<dbReference type="Gramene" id="Os04t0664800-00">
    <property type="protein sequence ID" value="Os04t0664800-00"/>
    <property type="gene ID" value="Os04g0664800"/>
</dbReference>
<dbReference type="KEGG" id="dosa:Os04g0664800"/>
<dbReference type="eggNOG" id="KOG0228">
    <property type="taxonomic scope" value="Eukaryota"/>
</dbReference>
<dbReference type="HOGENOM" id="CLU_001528_6_0_1"/>
<dbReference type="InParanoid" id="Q56UD0"/>
<dbReference type="OMA" id="HVRTAFH"/>
<dbReference type="OrthoDB" id="202537at2759"/>
<dbReference type="Proteomes" id="UP000000763">
    <property type="component" value="Chromosome 4"/>
</dbReference>
<dbReference type="Proteomes" id="UP000059680">
    <property type="component" value="Chromosome 4"/>
</dbReference>
<dbReference type="GO" id="GO:0048046">
    <property type="term" value="C:apoplast"/>
    <property type="evidence" value="ECO:0007669"/>
    <property type="project" value="UniProtKB-SubCell"/>
</dbReference>
<dbReference type="GO" id="GO:0004564">
    <property type="term" value="F:beta-fructofuranosidase activity"/>
    <property type="evidence" value="ECO:0007669"/>
    <property type="project" value="UniProtKB-EC"/>
</dbReference>
<dbReference type="GO" id="GO:0005975">
    <property type="term" value="P:carbohydrate metabolic process"/>
    <property type="evidence" value="ECO:0007669"/>
    <property type="project" value="InterPro"/>
</dbReference>
<dbReference type="CDD" id="cd18624">
    <property type="entry name" value="GH32_Fruct1-like"/>
    <property type="match status" value="1"/>
</dbReference>
<dbReference type="FunFam" id="2.60.120.560:FF:000002">
    <property type="entry name" value="Beta-fructofuranosidase, insoluble isoenzyme CWINV1"/>
    <property type="match status" value="1"/>
</dbReference>
<dbReference type="Gene3D" id="2.60.120.560">
    <property type="entry name" value="Exo-inulinase, domain 1"/>
    <property type="match status" value="1"/>
</dbReference>
<dbReference type="Gene3D" id="2.115.10.20">
    <property type="entry name" value="Glycosyl hydrolase domain, family 43"/>
    <property type="match status" value="1"/>
</dbReference>
<dbReference type="InterPro" id="IPR013320">
    <property type="entry name" value="ConA-like_dom_sf"/>
</dbReference>
<dbReference type="InterPro" id="IPR050551">
    <property type="entry name" value="Fructan_Metab_Enzymes"/>
</dbReference>
<dbReference type="InterPro" id="IPR001362">
    <property type="entry name" value="Glyco_hydro_32"/>
</dbReference>
<dbReference type="InterPro" id="IPR013189">
    <property type="entry name" value="Glyco_hydro_32_C"/>
</dbReference>
<dbReference type="InterPro" id="IPR013148">
    <property type="entry name" value="Glyco_hydro_32_N"/>
</dbReference>
<dbReference type="InterPro" id="IPR023296">
    <property type="entry name" value="Glyco_hydro_beta-prop_sf"/>
</dbReference>
<dbReference type="PANTHER" id="PTHR31953">
    <property type="entry name" value="BETA-FRUCTOFURANOSIDASE, INSOLUBLE ISOENZYME CWINV1-RELATED"/>
    <property type="match status" value="1"/>
</dbReference>
<dbReference type="Pfam" id="PF08244">
    <property type="entry name" value="Glyco_hydro_32C"/>
    <property type="match status" value="1"/>
</dbReference>
<dbReference type="Pfam" id="PF00251">
    <property type="entry name" value="Glyco_hydro_32N"/>
    <property type="match status" value="1"/>
</dbReference>
<dbReference type="SMART" id="SM00640">
    <property type="entry name" value="Glyco_32"/>
    <property type="match status" value="1"/>
</dbReference>
<dbReference type="SUPFAM" id="SSF75005">
    <property type="entry name" value="Arabinanase/levansucrase/invertase"/>
    <property type="match status" value="1"/>
</dbReference>
<dbReference type="SUPFAM" id="SSF49899">
    <property type="entry name" value="Concanavalin A-like lectins/glucanases"/>
    <property type="match status" value="1"/>
</dbReference>
<evidence type="ECO:0000250" key="1"/>
<evidence type="ECO:0000255" key="2"/>
<evidence type="ECO:0000269" key="3">
    <source>
    </source>
</evidence>
<evidence type="ECO:0000305" key="4"/>
<feature type="signal peptide" evidence="2">
    <location>
        <begin position="1"/>
        <end position="25"/>
    </location>
</feature>
<feature type="chain" id="PRO_0000033383" description="Beta-fructofuranosidase, insoluble isoenzyme 6">
    <location>
        <begin position="26"/>
        <end position="596"/>
    </location>
</feature>
<feature type="active site" evidence="1">
    <location>
        <position position="52"/>
    </location>
</feature>
<feature type="binding site" evidence="1">
    <location>
        <begin position="49"/>
        <end position="52"/>
    </location>
    <ligand>
        <name>substrate</name>
    </ligand>
</feature>
<feature type="binding site" evidence="1">
    <location>
        <position position="68"/>
    </location>
    <ligand>
        <name>substrate</name>
    </ligand>
</feature>
<feature type="binding site" evidence="1">
    <location>
        <position position="76"/>
    </location>
    <ligand>
        <name>substrate</name>
    </ligand>
</feature>
<feature type="binding site" evidence="1">
    <location>
        <begin position="113"/>
        <end position="114"/>
    </location>
    <ligand>
        <name>substrate</name>
    </ligand>
</feature>
<feature type="binding site" evidence="1">
    <location>
        <begin position="177"/>
        <end position="178"/>
    </location>
    <ligand>
        <name>substrate</name>
    </ligand>
</feature>
<feature type="binding site" evidence="1">
    <location>
        <position position="232"/>
    </location>
    <ligand>
        <name>substrate</name>
    </ligand>
</feature>
<feature type="glycosylation site" description="N-linked (GlcNAc...) asparagine" evidence="2">
    <location>
        <position position="80"/>
    </location>
</feature>
<feature type="glycosylation site" description="N-linked (GlcNAc...) asparagine" evidence="2">
    <location>
        <position position="335"/>
    </location>
</feature>
<feature type="glycosylation site" description="N-linked (GlcNAc...) asparagine" evidence="2">
    <location>
        <position position="556"/>
    </location>
</feature>
<feature type="disulfide bond" evidence="1">
    <location>
        <begin position="436"/>
        <end position="482"/>
    </location>
</feature>
<feature type="sequence conflict" description="In Ref. 2." evidence="4" ref="2">
    <location>
        <begin position="52"/>
        <end position="54"/>
    </location>
</feature>
<sequence length="596" mass="64743">MALAGLPLSVFAIAVHFCLVFSSSSSPPVCPANGHRDRTAYHFQPAKNWQNDPNGPVYYNGMYHLFYQYNPHGALWDVGNLSWGHSVSGDLVNWAALDNALDPTAPFDANGCASGSVTILPDGVPVVMYSGIDARRRQVQNVAFPKNPRDPLLREWTKPGYNPVIPVPADVSPDNFRDPTTAWLGSDGLWRFAISAVADGVGATLVYRSADFLRWERNAAPLHASRDAVMAECPDLFPVAEHGEDGLDLDASAIGGAGAGVRHVLKVSMPDTLEDYYMVGRYDDADDTFTVPPEDLEAHGDDYRRWRRIDHGHLYASKTFYDAGKKRRVLWAWVNESDSEADDVTKGWSGLQSFPRAVWLDEGGRQLVQWPVEEIETLRRKRGVLLGGNEVEAGGLREIGGIAGSQADVEVAFEIASLAGADRLEPDHLRDPDALCGENGAAVHGGIGPFGLLVMASGDLRERTAVFFRVFRLSHGYTVLMCTDLTRSTSRAGVYKPSHGGFVDIDIEKDRAISLRTLIDHSIVESFGGGGRTCMTARVYPEHVATGSSHLYVFNNASDAVKVSKLEAWELATASVNAGDDGLISYGGPVCAAQVQ</sequence>
<name>INV6_ORYSJ</name>
<reference key="1">
    <citation type="journal article" date="2005" name="Plant Cell Rep.">
        <title>Molecular cloning and expression analysis of the cell-wall invertase gene family in rice (Oryza sativa L.).</title>
        <authorList>
            <person name="Cho J.-I."/>
            <person name="Lee S.-K."/>
            <person name="Ko S."/>
            <person name="Kim H.-K."/>
            <person name="Jun S.-H."/>
            <person name="Lee Y.-H."/>
            <person name="Bhoo S.H."/>
            <person name="Lee K.-W."/>
            <person name="An G."/>
            <person name="Hahn T.-R."/>
            <person name="Jeon J.-S."/>
        </authorList>
    </citation>
    <scope>NUCLEOTIDE SEQUENCE [MRNA]</scope>
    <scope>TISSUE SPECIFICITY</scope>
    <source>
        <strain>cv. Nipponbare</strain>
    </source>
</reference>
<reference key="2">
    <citation type="journal article" date="2002" name="Nature">
        <title>Sequence and analysis of rice chromosome 4.</title>
        <authorList>
            <person name="Feng Q."/>
            <person name="Zhang Y."/>
            <person name="Hao P."/>
            <person name="Wang S."/>
            <person name="Fu G."/>
            <person name="Huang Y."/>
            <person name="Li Y."/>
            <person name="Zhu J."/>
            <person name="Liu Y."/>
            <person name="Hu X."/>
            <person name="Jia P."/>
            <person name="Zhang Y."/>
            <person name="Zhao Q."/>
            <person name="Ying K."/>
            <person name="Yu S."/>
            <person name="Tang Y."/>
            <person name="Weng Q."/>
            <person name="Zhang L."/>
            <person name="Lu Y."/>
            <person name="Mu J."/>
            <person name="Lu Y."/>
            <person name="Zhang L.S."/>
            <person name="Yu Z."/>
            <person name="Fan D."/>
            <person name="Liu X."/>
            <person name="Lu T."/>
            <person name="Li C."/>
            <person name="Wu Y."/>
            <person name="Sun T."/>
            <person name="Lei H."/>
            <person name="Li T."/>
            <person name="Hu H."/>
            <person name="Guan J."/>
            <person name="Wu M."/>
            <person name="Zhang R."/>
            <person name="Zhou B."/>
            <person name="Chen Z."/>
            <person name="Chen L."/>
            <person name="Jin Z."/>
            <person name="Wang R."/>
            <person name="Yin H."/>
            <person name="Cai Z."/>
            <person name="Ren S."/>
            <person name="Lv G."/>
            <person name="Gu W."/>
            <person name="Zhu G."/>
            <person name="Tu Y."/>
            <person name="Jia J."/>
            <person name="Zhang Y."/>
            <person name="Chen J."/>
            <person name="Kang H."/>
            <person name="Chen X."/>
            <person name="Shao C."/>
            <person name="Sun Y."/>
            <person name="Hu Q."/>
            <person name="Zhang X."/>
            <person name="Zhang W."/>
            <person name="Wang L."/>
            <person name="Ding C."/>
            <person name="Sheng H."/>
            <person name="Gu J."/>
            <person name="Chen S."/>
            <person name="Ni L."/>
            <person name="Zhu F."/>
            <person name="Chen W."/>
            <person name="Lan L."/>
            <person name="Lai Y."/>
            <person name="Cheng Z."/>
            <person name="Gu M."/>
            <person name="Jiang J."/>
            <person name="Li J."/>
            <person name="Hong G."/>
            <person name="Xue Y."/>
            <person name="Han B."/>
        </authorList>
    </citation>
    <scope>NUCLEOTIDE SEQUENCE [LARGE SCALE GENOMIC DNA]</scope>
    <source>
        <strain>cv. Nipponbare</strain>
    </source>
</reference>
<reference key="3">
    <citation type="journal article" date="2005" name="Nature">
        <title>The map-based sequence of the rice genome.</title>
        <authorList>
            <consortium name="International rice genome sequencing project (IRGSP)"/>
        </authorList>
    </citation>
    <scope>NUCLEOTIDE SEQUENCE [LARGE SCALE GENOMIC DNA]</scope>
    <source>
        <strain>cv. Nipponbare</strain>
    </source>
</reference>
<reference key="4">
    <citation type="journal article" date="2008" name="Nucleic Acids Res.">
        <title>The rice annotation project database (RAP-DB): 2008 update.</title>
        <authorList>
            <consortium name="The rice annotation project (RAP)"/>
        </authorList>
    </citation>
    <scope>GENOME REANNOTATION</scope>
    <source>
        <strain>cv. Nipponbare</strain>
    </source>
</reference>
<reference key="5">
    <citation type="journal article" date="2013" name="Rice">
        <title>Improvement of the Oryza sativa Nipponbare reference genome using next generation sequence and optical map data.</title>
        <authorList>
            <person name="Kawahara Y."/>
            <person name="de la Bastide M."/>
            <person name="Hamilton J.P."/>
            <person name="Kanamori H."/>
            <person name="McCombie W.R."/>
            <person name="Ouyang S."/>
            <person name="Schwartz D.C."/>
            <person name="Tanaka T."/>
            <person name="Wu J."/>
            <person name="Zhou S."/>
            <person name="Childs K.L."/>
            <person name="Davidson R.M."/>
            <person name="Lin H."/>
            <person name="Quesada-Ocampo L."/>
            <person name="Vaillancourt B."/>
            <person name="Sakai H."/>
            <person name="Lee S.S."/>
            <person name="Kim J."/>
            <person name="Numa H."/>
            <person name="Itoh T."/>
            <person name="Buell C.R."/>
            <person name="Matsumoto T."/>
        </authorList>
    </citation>
    <scope>GENOME REANNOTATION</scope>
    <source>
        <strain>cv. Nipponbare</strain>
    </source>
</reference>